<proteinExistence type="inferred from homology"/>
<keyword id="KW-0963">Cytoplasm</keyword>
<keyword id="KW-0413">Isomerase</keyword>
<keyword id="KW-0627">Porphyrin biosynthesis</keyword>
<keyword id="KW-0663">Pyridoxal phosphate</keyword>
<reference key="1">
    <citation type="submission" date="2008-02" db="EMBL/GenBank/DDBJ databases">
        <title>Complete sequence of Yersinia pseudotuberculosis YPIII.</title>
        <authorList>
            <consortium name="US DOE Joint Genome Institute"/>
            <person name="Copeland A."/>
            <person name="Lucas S."/>
            <person name="Lapidus A."/>
            <person name="Glavina del Rio T."/>
            <person name="Dalin E."/>
            <person name="Tice H."/>
            <person name="Bruce D."/>
            <person name="Goodwin L."/>
            <person name="Pitluck S."/>
            <person name="Munk A.C."/>
            <person name="Brettin T."/>
            <person name="Detter J.C."/>
            <person name="Han C."/>
            <person name="Tapia R."/>
            <person name="Schmutz J."/>
            <person name="Larimer F."/>
            <person name="Land M."/>
            <person name="Hauser L."/>
            <person name="Challacombe J.F."/>
            <person name="Green L."/>
            <person name="Lindler L.E."/>
            <person name="Nikolich M.P."/>
            <person name="Richardson P."/>
        </authorList>
    </citation>
    <scope>NUCLEOTIDE SEQUENCE [LARGE SCALE GENOMIC DNA]</scope>
    <source>
        <strain>YPIII</strain>
    </source>
</reference>
<feature type="chain" id="PRO_1000121935" description="Glutamate-1-semialdehyde 2,1-aminomutase">
    <location>
        <begin position="1"/>
        <end position="426"/>
    </location>
</feature>
<feature type="modified residue" description="N6-(pyridoxal phosphate)lysine" evidence="1">
    <location>
        <position position="265"/>
    </location>
</feature>
<dbReference type="EC" id="5.4.3.8" evidence="1"/>
<dbReference type="EMBL" id="CP000950">
    <property type="protein sequence ID" value="ACA69726.1"/>
    <property type="molecule type" value="Genomic_DNA"/>
</dbReference>
<dbReference type="RefSeq" id="WP_011191761.1">
    <property type="nucleotide sequence ID" value="NZ_CP009792.1"/>
</dbReference>
<dbReference type="SMR" id="B1JK22"/>
<dbReference type="GeneID" id="49787253"/>
<dbReference type="KEGG" id="ypy:YPK_3459"/>
<dbReference type="PATRIC" id="fig|502800.11.peg.4200"/>
<dbReference type="UniPathway" id="UPA00251">
    <property type="reaction ID" value="UER00317"/>
</dbReference>
<dbReference type="GO" id="GO:0005737">
    <property type="term" value="C:cytoplasm"/>
    <property type="evidence" value="ECO:0007669"/>
    <property type="project" value="UniProtKB-SubCell"/>
</dbReference>
<dbReference type="GO" id="GO:0042286">
    <property type="term" value="F:glutamate-1-semialdehyde 2,1-aminomutase activity"/>
    <property type="evidence" value="ECO:0007669"/>
    <property type="project" value="UniProtKB-UniRule"/>
</dbReference>
<dbReference type="GO" id="GO:0030170">
    <property type="term" value="F:pyridoxal phosphate binding"/>
    <property type="evidence" value="ECO:0007669"/>
    <property type="project" value="InterPro"/>
</dbReference>
<dbReference type="GO" id="GO:0008483">
    <property type="term" value="F:transaminase activity"/>
    <property type="evidence" value="ECO:0007669"/>
    <property type="project" value="InterPro"/>
</dbReference>
<dbReference type="GO" id="GO:0006782">
    <property type="term" value="P:protoporphyrinogen IX biosynthetic process"/>
    <property type="evidence" value="ECO:0007669"/>
    <property type="project" value="UniProtKB-UniRule"/>
</dbReference>
<dbReference type="CDD" id="cd00610">
    <property type="entry name" value="OAT_like"/>
    <property type="match status" value="1"/>
</dbReference>
<dbReference type="FunFam" id="3.40.640.10:FF:000021">
    <property type="entry name" value="Glutamate-1-semialdehyde 2,1-aminomutase"/>
    <property type="match status" value="1"/>
</dbReference>
<dbReference type="FunFam" id="3.90.1150.10:FF:000012">
    <property type="entry name" value="Glutamate-1-semialdehyde 2,1-aminomutase"/>
    <property type="match status" value="1"/>
</dbReference>
<dbReference type="Gene3D" id="3.90.1150.10">
    <property type="entry name" value="Aspartate Aminotransferase, domain 1"/>
    <property type="match status" value="1"/>
</dbReference>
<dbReference type="Gene3D" id="3.40.640.10">
    <property type="entry name" value="Type I PLP-dependent aspartate aminotransferase-like (Major domain)"/>
    <property type="match status" value="1"/>
</dbReference>
<dbReference type="HAMAP" id="MF_00375">
    <property type="entry name" value="HemL_aminotrans_3"/>
    <property type="match status" value="1"/>
</dbReference>
<dbReference type="InterPro" id="IPR004639">
    <property type="entry name" value="4pyrrol_synth_GluAld_NH2Trfase"/>
</dbReference>
<dbReference type="InterPro" id="IPR005814">
    <property type="entry name" value="Aminotrans_3"/>
</dbReference>
<dbReference type="InterPro" id="IPR049704">
    <property type="entry name" value="Aminotrans_3_PPA_site"/>
</dbReference>
<dbReference type="InterPro" id="IPR015424">
    <property type="entry name" value="PyrdxlP-dep_Trfase"/>
</dbReference>
<dbReference type="InterPro" id="IPR015421">
    <property type="entry name" value="PyrdxlP-dep_Trfase_major"/>
</dbReference>
<dbReference type="InterPro" id="IPR015422">
    <property type="entry name" value="PyrdxlP-dep_Trfase_small"/>
</dbReference>
<dbReference type="NCBIfam" id="TIGR00713">
    <property type="entry name" value="hemL"/>
    <property type="match status" value="1"/>
</dbReference>
<dbReference type="NCBIfam" id="NF000818">
    <property type="entry name" value="PRK00062.1"/>
    <property type="match status" value="1"/>
</dbReference>
<dbReference type="PANTHER" id="PTHR43713">
    <property type="entry name" value="GLUTAMATE-1-SEMIALDEHYDE 2,1-AMINOMUTASE"/>
    <property type="match status" value="1"/>
</dbReference>
<dbReference type="PANTHER" id="PTHR43713:SF3">
    <property type="entry name" value="GLUTAMATE-1-SEMIALDEHYDE 2,1-AMINOMUTASE 1, CHLOROPLASTIC-RELATED"/>
    <property type="match status" value="1"/>
</dbReference>
<dbReference type="Pfam" id="PF00202">
    <property type="entry name" value="Aminotran_3"/>
    <property type="match status" value="1"/>
</dbReference>
<dbReference type="SUPFAM" id="SSF53383">
    <property type="entry name" value="PLP-dependent transferases"/>
    <property type="match status" value="1"/>
</dbReference>
<dbReference type="PROSITE" id="PS00600">
    <property type="entry name" value="AA_TRANSFER_CLASS_3"/>
    <property type="match status" value="1"/>
</dbReference>
<accession>B1JK22</accession>
<protein>
    <recommendedName>
        <fullName evidence="1">Glutamate-1-semialdehyde 2,1-aminomutase</fullName>
        <shortName evidence="1">GSA</shortName>
        <ecNumber evidence="1">5.4.3.8</ecNumber>
    </recommendedName>
    <alternativeName>
        <fullName evidence="1">Glutamate-1-semialdehyde aminotransferase</fullName>
        <shortName evidence="1">GSA-AT</shortName>
    </alternativeName>
</protein>
<gene>
    <name evidence="1" type="primary">hemL</name>
    <name type="ordered locus">YPK_3459</name>
</gene>
<sequence>MSKSENLYAQAQQLIPGGVNSPVRAFTGVGGIPLFIERADGAYLFDVDGKAYIDYVGSWGPMILGHNHPAIRQAVIEAVERGLSFGAPTEMEVKMAQLVTDLVPTMDMVRMVNSGTEATMSAIRLARGYTGRDKIIKFEGCYHGHADCLLVKAGSGALTLGQPNSPGVPADFAKHTLTCTYNDLASVRQAFEQYPQEVACIIVEPVAGNMNCIPPLPEFLPGLRALCDEFGALLIIDEVMTGFRVALAGAQDYYHVIPDLTCLGKIIGGGMPVGAFGGRREVMNALAPTGPVYQAGTLSGNPIAMAAGFACLTEISQVGVYETLTELTDSLATGLRHAAKEENIPLVVNHVGGMFGLFFTNADTVTCYQDVMNCDVERFKRFFHLMLEEGVYLAPSAFEAGFMSLAHSNEDIQKTVNAARRCFAKL</sequence>
<evidence type="ECO:0000255" key="1">
    <source>
        <dbReference type="HAMAP-Rule" id="MF_00375"/>
    </source>
</evidence>
<name>GSA_YERPY</name>
<comment type="catalytic activity">
    <reaction evidence="1">
        <text>(S)-4-amino-5-oxopentanoate = 5-aminolevulinate</text>
        <dbReference type="Rhea" id="RHEA:14265"/>
        <dbReference type="ChEBI" id="CHEBI:57501"/>
        <dbReference type="ChEBI" id="CHEBI:356416"/>
        <dbReference type="EC" id="5.4.3.8"/>
    </reaction>
</comment>
<comment type="cofactor">
    <cofactor evidence="1">
        <name>pyridoxal 5'-phosphate</name>
        <dbReference type="ChEBI" id="CHEBI:597326"/>
    </cofactor>
</comment>
<comment type="pathway">
    <text evidence="1">Porphyrin-containing compound metabolism; protoporphyrin-IX biosynthesis; 5-aminolevulinate from L-glutamyl-tRNA(Glu): step 2/2.</text>
</comment>
<comment type="subunit">
    <text evidence="1">Homodimer.</text>
</comment>
<comment type="subcellular location">
    <subcellularLocation>
        <location evidence="1">Cytoplasm</location>
    </subcellularLocation>
</comment>
<comment type="similarity">
    <text evidence="1">Belongs to the class-III pyridoxal-phosphate-dependent aminotransferase family. HemL subfamily.</text>
</comment>
<organism>
    <name type="scientific">Yersinia pseudotuberculosis serotype O:3 (strain YPIII)</name>
    <dbReference type="NCBI Taxonomy" id="502800"/>
    <lineage>
        <taxon>Bacteria</taxon>
        <taxon>Pseudomonadati</taxon>
        <taxon>Pseudomonadota</taxon>
        <taxon>Gammaproteobacteria</taxon>
        <taxon>Enterobacterales</taxon>
        <taxon>Yersiniaceae</taxon>
        <taxon>Yersinia</taxon>
    </lineage>
</organism>